<organism>
    <name type="scientific">Staphylococcus aureus (strain MRSA252)</name>
    <dbReference type="NCBI Taxonomy" id="282458"/>
    <lineage>
        <taxon>Bacteria</taxon>
        <taxon>Bacillati</taxon>
        <taxon>Bacillota</taxon>
        <taxon>Bacilli</taxon>
        <taxon>Bacillales</taxon>
        <taxon>Staphylococcaceae</taxon>
        <taxon>Staphylococcus</taxon>
    </lineage>
</organism>
<gene>
    <name evidence="1" type="primary">ureE</name>
    <name type="ordered locus">SAR2375</name>
</gene>
<evidence type="ECO:0000255" key="1">
    <source>
        <dbReference type="HAMAP-Rule" id="MF_00822"/>
    </source>
</evidence>
<name>UREE_STAAR</name>
<proteinExistence type="inferred from homology"/>
<reference key="1">
    <citation type="journal article" date="2004" name="Proc. Natl. Acad. Sci. U.S.A.">
        <title>Complete genomes of two clinical Staphylococcus aureus strains: evidence for the rapid evolution of virulence and drug resistance.</title>
        <authorList>
            <person name="Holden M.T.G."/>
            <person name="Feil E.J."/>
            <person name="Lindsay J.A."/>
            <person name="Peacock S.J."/>
            <person name="Day N.P.J."/>
            <person name="Enright M.C."/>
            <person name="Foster T.J."/>
            <person name="Moore C.E."/>
            <person name="Hurst L."/>
            <person name="Atkin R."/>
            <person name="Barron A."/>
            <person name="Bason N."/>
            <person name="Bentley S.D."/>
            <person name="Chillingworth C."/>
            <person name="Chillingworth T."/>
            <person name="Churcher C."/>
            <person name="Clark L."/>
            <person name="Corton C."/>
            <person name="Cronin A."/>
            <person name="Doggett J."/>
            <person name="Dowd L."/>
            <person name="Feltwell T."/>
            <person name="Hance Z."/>
            <person name="Harris B."/>
            <person name="Hauser H."/>
            <person name="Holroyd S."/>
            <person name="Jagels K."/>
            <person name="James K.D."/>
            <person name="Lennard N."/>
            <person name="Line A."/>
            <person name="Mayes R."/>
            <person name="Moule S."/>
            <person name="Mungall K."/>
            <person name="Ormond D."/>
            <person name="Quail M.A."/>
            <person name="Rabbinowitsch E."/>
            <person name="Rutherford K.M."/>
            <person name="Sanders M."/>
            <person name="Sharp S."/>
            <person name="Simmonds M."/>
            <person name="Stevens K."/>
            <person name="Whitehead S."/>
            <person name="Barrell B.G."/>
            <person name="Spratt B.G."/>
            <person name="Parkhill J."/>
        </authorList>
    </citation>
    <scope>NUCLEOTIDE SEQUENCE [LARGE SCALE GENOMIC DNA]</scope>
    <source>
        <strain>MRSA252</strain>
    </source>
</reference>
<protein>
    <recommendedName>
        <fullName evidence="1">Urease accessory protein UreE</fullName>
    </recommendedName>
</protein>
<feature type="chain" id="PRO_0000223438" description="Urease accessory protein UreE">
    <location>
        <begin position="1"/>
        <end position="150"/>
    </location>
</feature>
<keyword id="KW-0143">Chaperone</keyword>
<keyword id="KW-0963">Cytoplasm</keyword>
<keyword id="KW-0533">Nickel</keyword>
<keyword id="KW-0996">Nickel insertion</keyword>
<accession>Q6GEE3</accession>
<dbReference type="EMBL" id="BX571856">
    <property type="protein sequence ID" value="CAG41356.1"/>
    <property type="molecule type" value="Genomic_DNA"/>
</dbReference>
<dbReference type="RefSeq" id="WP_000634592.1">
    <property type="nucleotide sequence ID" value="NC_002952.2"/>
</dbReference>
<dbReference type="SMR" id="Q6GEE3"/>
<dbReference type="KEGG" id="sar:SAR2375"/>
<dbReference type="HOGENOM" id="CLU_093757_3_1_9"/>
<dbReference type="Proteomes" id="UP000000596">
    <property type="component" value="Chromosome"/>
</dbReference>
<dbReference type="GO" id="GO:0005737">
    <property type="term" value="C:cytoplasm"/>
    <property type="evidence" value="ECO:0007669"/>
    <property type="project" value="UniProtKB-SubCell"/>
</dbReference>
<dbReference type="GO" id="GO:0016151">
    <property type="term" value="F:nickel cation binding"/>
    <property type="evidence" value="ECO:0007669"/>
    <property type="project" value="UniProtKB-UniRule"/>
</dbReference>
<dbReference type="GO" id="GO:0051082">
    <property type="term" value="F:unfolded protein binding"/>
    <property type="evidence" value="ECO:0007669"/>
    <property type="project" value="UniProtKB-UniRule"/>
</dbReference>
<dbReference type="GO" id="GO:0006457">
    <property type="term" value="P:protein folding"/>
    <property type="evidence" value="ECO:0007669"/>
    <property type="project" value="InterPro"/>
</dbReference>
<dbReference type="GO" id="GO:0065003">
    <property type="term" value="P:protein-containing complex assembly"/>
    <property type="evidence" value="ECO:0007669"/>
    <property type="project" value="InterPro"/>
</dbReference>
<dbReference type="GO" id="GO:0019627">
    <property type="term" value="P:urea metabolic process"/>
    <property type="evidence" value="ECO:0007669"/>
    <property type="project" value="InterPro"/>
</dbReference>
<dbReference type="CDD" id="cd00571">
    <property type="entry name" value="UreE"/>
    <property type="match status" value="1"/>
</dbReference>
<dbReference type="Gene3D" id="2.60.260.20">
    <property type="entry name" value="Urease metallochaperone UreE, N-terminal domain"/>
    <property type="match status" value="1"/>
</dbReference>
<dbReference type="Gene3D" id="3.30.70.790">
    <property type="entry name" value="UreE, C-terminal domain"/>
    <property type="match status" value="1"/>
</dbReference>
<dbReference type="HAMAP" id="MF_00822">
    <property type="entry name" value="UreE"/>
    <property type="match status" value="1"/>
</dbReference>
<dbReference type="InterPro" id="IPR012406">
    <property type="entry name" value="UreE"/>
</dbReference>
<dbReference type="InterPro" id="IPR007864">
    <property type="entry name" value="UreE_C_dom"/>
</dbReference>
<dbReference type="InterPro" id="IPR004029">
    <property type="entry name" value="UreE_N"/>
</dbReference>
<dbReference type="InterPro" id="IPR036118">
    <property type="entry name" value="UreE_N_sf"/>
</dbReference>
<dbReference type="NCBIfam" id="NF009755">
    <property type="entry name" value="PRK13261.2-1"/>
    <property type="match status" value="1"/>
</dbReference>
<dbReference type="Pfam" id="PF05194">
    <property type="entry name" value="UreE_C"/>
    <property type="match status" value="1"/>
</dbReference>
<dbReference type="Pfam" id="PF02814">
    <property type="entry name" value="UreE_N"/>
    <property type="match status" value="1"/>
</dbReference>
<dbReference type="PIRSF" id="PIRSF036402">
    <property type="entry name" value="Ureas_acces_UreE"/>
    <property type="match status" value="1"/>
</dbReference>
<dbReference type="SMART" id="SM00988">
    <property type="entry name" value="UreE_N"/>
    <property type="match status" value="1"/>
</dbReference>
<dbReference type="SUPFAM" id="SSF69737">
    <property type="entry name" value="Urease metallochaperone UreE, C-terminal domain"/>
    <property type="match status" value="1"/>
</dbReference>
<dbReference type="SUPFAM" id="SSF69287">
    <property type="entry name" value="Urease metallochaperone UreE, N-terminal domain"/>
    <property type="match status" value="1"/>
</dbReference>
<comment type="function">
    <text evidence="1">Involved in urease metallocenter assembly. Binds nickel. Probably functions as a nickel donor during metallocenter assembly.</text>
</comment>
<comment type="subcellular location">
    <subcellularLocation>
        <location evidence="1">Cytoplasm</location>
    </subcellularLocation>
</comment>
<comment type="similarity">
    <text evidence="1">Belongs to the UreE family.</text>
</comment>
<sequence length="150" mass="17326">MIVEEIQGNIANLSNSEKQKHVEKVYLENSDLVKRIQRVVTDHGTEIGIRLKQPIDLQYGDILYADDHNMIVVDVNSEDLLVIQPRTLQEMGDIAHQLGNRHLPAQFTETEMLVQYDYLVEDLLKSLGIPYVREDRKVNKAFRHIGHSHD</sequence>